<feature type="chain" id="PRO_0000113577" description="Serine hydroxymethyltransferase 1">
    <location>
        <begin position="1"/>
        <end position="417"/>
    </location>
</feature>
<feature type="binding site" evidence="1">
    <location>
        <position position="121"/>
    </location>
    <ligand>
        <name>(6S)-5,6,7,8-tetrahydrofolate</name>
        <dbReference type="ChEBI" id="CHEBI:57453"/>
    </ligand>
</feature>
<feature type="binding site" evidence="1">
    <location>
        <begin position="125"/>
        <end position="127"/>
    </location>
    <ligand>
        <name>(6S)-5,6,7,8-tetrahydrofolate</name>
        <dbReference type="ChEBI" id="CHEBI:57453"/>
    </ligand>
</feature>
<feature type="binding site" evidence="1">
    <location>
        <begin position="355"/>
        <end position="357"/>
    </location>
    <ligand>
        <name>(6S)-5,6,7,8-tetrahydrofolate</name>
        <dbReference type="ChEBI" id="CHEBI:57453"/>
    </ligand>
</feature>
<feature type="site" description="Plays an important role in substrate specificity" evidence="1">
    <location>
        <position position="228"/>
    </location>
</feature>
<feature type="modified residue" description="N6-(pyridoxal phosphate)lysine" evidence="1">
    <location>
        <position position="229"/>
    </location>
</feature>
<sequence length="417" mass="45312">MLKREMNIADYDADLWQAMEQEVVRQEEHIELIASENYTSPRVMQAQGSQLTNKYAEGYPGKRYYGGCEYVDIVEQLAIDRAKALFGADYANVQPHSGSQANFAVYTALLQPGDTILGMNLAHGGHLTHGSPVNLSGKLYKVIPYGIDESGKIDYDEMAELARTHQPKMIVGGFSAYSGVVDWAKMREIADSIGAYLFVDMAHVAGLIAADVYPNPVPHAHIVTTTTHKTLAGPRGGLILAKGGDEDLYKKLNSAVFPGGQGGPLMHVIAGKAVALKEAMEPEFKVYQQQVAKNAKAMVEVFLSRGFNVVSGATSNHLFLLDLVSKNLTGKEADAALGRANITVNKNSVPNDPKSPFVTSGIRIGTPAATRRGFKEAEVRELAGWICDVLDNINDEATIERVKQKVLDICARFPVYA</sequence>
<keyword id="KW-0028">Amino-acid biosynthesis</keyword>
<keyword id="KW-0963">Cytoplasm</keyword>
<keyword id="KW-0554">One-carbon metabolism</keyword>
<keyword id="KW-0663">Pyridoxal phosphate</keyword>
<keyword id="KW-1185">Reference proteome</keyword>
<keyword id="KW-0808">Transferase</keyword>
<evidence type="ECO:0000255" key="1">
    <source>
        <dbReference type="HAMAP-Rule" id="MF_00051"/>
    </source>
</evidence>
<proteinExistence type="inferred from homology"/>
<reference key="1">
    <citation type="journal article" date="2004" name="Proc. Natl. Acad. Sci. U.S.A.">
        <title>Genome sequence of the enterobacterial phytopathogen Erwinia carotovora subsp. atroseptica and characterization of virulence factors.</title>
        <authorList>
            <person name="Bell K.S."/>
            <person name="Sebaihia M."/>
            <person name="Pritchard L."/>
            <person name="Holden M.T.G."/>
            <person name="Hyman L.J."/>
            <person name="Holeva M.C."/>
            <person name="Thomson N.R."/>
            <person name="Bentley S.D."/>
            <person name="Churcher L.J.C."/>
            <person name="Mungall K."/>
            <person name="Atkin R."/>
            <person name="Bason N."/>
            <person name="Brooks K."/>
            <person name="Chillingworth T."/>
            <person name="Clark K."/>
            <person name="Doggett J."/>
            <person name="Fraser A."/>
            <person name="Hance Z."/>
            <person name="Hauser H."/>
            <person name="Jagels K."/>
            <person name="Moule S."/>
            <person name="Norbertczak H."/>
            <person name="Ormond D."/>
            <person name="Price C."/>
            <person name="Quail M.A."/>
            <person name="Sanders M."/>
            <person name="Walker D."/>
            <person name="Whitehead S."/>
            <person name="Salmond G.P.C."/>
            <person name="Birch P.R.J."/>
            <person name="Parkhill J."/>
            <person name="Toth I.K."/>
        </authorList>
    </citation>
    <scope>NUCLEOTIDE SEQUENCE [LARGE SCALE GENOMIC DNA]</scope>
    <source>
        <strain>SCRI 1043 / ATCC BAA-672</strain>
    </source>
</reference>
<comment type="function">
    <text evidence="1">Catalyzes the reversible interconversion of serine and glycine with tetrahydrofolate (THF) serving as the one-carbon carrier. This reaction serves as the major source of one-carbon groups required for the biosynthesis of purines, thymidylate, methionine, and other important biomolecules. Also exhibits THF-independent aldolase activity toward beta-hydroxyamino acids, producing glycine and aldehydes, via a retro-aldol mechanism.</text>
</comment>
<comment type="catalytic activity">
    <reaction evidence="1">
        <text>(6R)-5,10-methylene-5,6,7,8-tetrahydrofolate + glycine + H2O = (6S)-5,6,7,8-tetrahydrofolate + L-serine</text>
        <dbReference type="Rhea" id="RHEA:15481"/>
        <dbReference type="ChEBI" id="CHEBI:15377"/>
        <dbReference type="ChEBI" id="CHEBI:15636"/>
        <dbReference type="ChEBI" id="CHEBI:33384"/>
        <dbReference type="ChEBI" id="CHEBI:57305"/>
        <dbReference type="ChEBI" id="CHEBI:57453"/>
        <dbReference type="EC" id="2.1.2.1"/>
    </reaction>
</comment>
<comment type="cofactor">
    <cofactor evidence="1">
        <name>pyridoxal 5'-phosphate</name>
        <dbReference type="ChEBI" id="CHEBI:597326"/>
    </cofactor>
</comment>
<comment type="pathway">
    <text evidence="1">One-carbon metabolism; tetrahydrofolate interconversion.</text>
</comment>
<comment type="pathway">
    <text evidence="1">Amino-acid biosynthesis; glycine biosynthesis; glycine from L-serine: step 1/1.</text>
</comment>
<comment type="subunit">
    <text evidence="1">Homodimer.</text>
</comment>
<comment type="subcellular location">
    <subcellularLocation>
        <location evidence="1">Cytoplasm</location>
    </subcellularLocation>
</comment>
<comment type="similarity">
    <text evidence="1">Belongs to the SHMT family.</text>
</comment>
<name>GLYA1_PECAS</name>
<gene>
    <name evidence="1" type="primary">glyA1</name>
    <name type="ordered locus">ECA3250</name>
</gene>
<organism>
    <name type="scientific">Pectobacterium atrosepticum (strain SCRI 1043 / ATCC BAA-672)</name>
    <name type="common">Erwinia carotovora subsp. atroseptica</name>
    <dbReference type="NCBI Taxonomy" id="218491"/>
    <lineage>
        <taxon>Bacteria</taxon>
        <taxon>Pseudomonadati</taxon>
        <taxon>Pseudomonadota</taxon>
        <taxon>Gammaproteobacteria</taxon>
        <taxon>Enterobacterales</taxon>
        <taxon>Pectobacteriaceae</taxon>
        <taxon>Pectobacterium</taxon>
    </lineage>
</organism>
<accession>Q6D246</accession>
<protein>
    <recommendedName>
        <fullName evidence="1">Serine hydroxymethyltransferase 1</fullName>
        <shortName evidence="1">SHMT 1</shortName>
        <shortName evidence="1">Serine methylase 1</shortName>
        <ecNumber evidence="1">2.1.2.1</ecNumber>
    </recommendedName>
</protein>
<dbReference type="EC" id="2.1.2.1" evidence="1"/>
<dbReference type="EMBL" id="BX950851">
    <property type="protein sequence ID" value="CAG76148.1"/>
    <property type="molecule type" value="Genomic_DNA"/>
</dbReference>
<dbReference type="RefSeq" id="WP_011094769.1">
    <property type="nucleotide sequence ID" value="NC_004547.2"/>
</dbReference>
<dbReference type="SMR" id="Q6D246"/>
<dbReference type="STRING" id="218491.ECA3250"/>
<dbReference type="KEGG" id="eca:ECA3250"/>
<dbReference type="PATRIC" id="fig|218491.5.peg.3293"/>
<dbReference type="eggNOG" id="COG0112">
    <property type="taxonomic scope" value="Bacteria"/>
</dbReference>
<dbReference type="HOGENOM" id="CLU_022477_2_1_6"/>
<dbReference type="OrthoDB" id="9803846at2"/>
<dbReference type="UniPathway" id="UPA00193"/>
<dbReference type="UniPathway" id="UPA00288">
    <property type="reaction ID" value="UER01023"/>
</dbReference>
<dbReference type="Proteomes" id="UP000007966">
    <property type="component" value="Chromosome"/>
</dbReference>
<dbReference type="GO" id="GO:0005829">
    <property type="term" value="C:cytosol"/>
    <property type="evidence" value="ECO:0007669"/>
    <property type="project" value="TreeGrafter"/>
</dbReference>
<dbReference type="GO" id="GO:0004372">
    <property type="term" value="F:glycine hydroxymethyltransferase activity"/>
    <property type="evidence" value="ECO:0007669"/>
    <property type="project" value="UniProtKB-UniRule"/>
</dbReference>
<dbReference type="GO" id="GO:0030170">
    <property type="term" value="F:pyridoxal phosphate binding"/>
    <property type="evidence" value="ECO:0007669"/>
    <property type="project" value="UniProtKB-UniRule"/>
</dbReference>
<dbReference type="GO" id="GO:0019264">
    <property type="term" value="P:glycine biosynthetic process from serine"/>
    <property type="evidence" value="ECO:0007669"/>
    <property type="project" value="UniProtKB-UniRule"/>
</dbReference>
<dbReference type="GO" id="GO:0035999">
    <property type="term" value="P:tetrahydrofolate interconversion"/>
    <property type="evidence" value="ECO:0007669"/>
    <property type="project" value="UniProtKB-UniRule"/>
</dbReference>
<dbReference type="CDD" id="cd00378">
    <property type="entry name" value="SHMT"/>
    <property type="match status" value="1"/>
</dbReference>
<dbReference type="FunFam" id="3.40.640.10:FF:000001">
    <property type="entry name" value="Serine hydroxymethyltransferase"/>
    <property type="match status" value="1"/>
</dbReference>
<dbReference type="FunFam" id="3.90.1150.10:FF:000003">
    <property type="entry name" value="Serine hydroxymethyltransferase"/>
    <property type="match status" value="1"/>
</dbReference>
<dbReference type="Gene3D" id="3.90.1150.10">
    <property type="entry name" value="Aspartate Aminotransferase, domain 1"/>
    <property type="match status" value="1"/>
</dbReference>
<dbReference type="Gene3D" id="3.40.640.10">
    <property type="entry name" value="Type I PLP-dependent aspartate aminotransferase-like (Major domain)"/>
    <property type="match status" value="1"/>
</dbReference>
<dbReference type="HAMAP" id="MF_00051">
    <property type="entry name" value="SHMT"/>
    <property type="match status" value="1"/>
</dbReference>
<dbReference type="InterPro" id="IPR015424">
    <property type="entry name" value="PyrdxlP-dep_Trfase"/>
</dbReference>
<dbReference type="InterPro" id="IPR015421">
    <property type="entry name" value="PyrdxlP-dep_Trfase_major"/>
</dbReference>
<dbReference type="InterPro" id="IPR015422">
    <property type="entry name" value="PyrdxlP-dep_Trfase_small"/>
</dbReference>
<dbReference type="InterPro" id="IPR001085">
    <property type="entry name" value="Ser_HO-MeTrfase"/>
</dbReference>
<dbReference type="InterPro" id="IPR049943">
    <property type="entry name" value="Ser_HO-MeTrfase-like"/>
</dbReference>
<dbReference type="InterPro" id="IPR019798">
    <property type="entry name" value="Ser_HO-MeTrfase_PLP_BS"/>
</dbReference>
<dbReference type="InterPro" id="IPR039429">
    <property type="entry name" value="SHMT-like_dom"/>
</dbReference>
<dbReference type="NCBIfam" id="NF000586">
    <property type="entry name" value="PRK00011.1"/>
    <property type="match status" value="1"/>
</dbReference>
<dbReference type="PANTHER" id="PTHR11680">
    <property type="entry name" value="SERINE HYDROXYMETHYLTRANSFERASE"/>
    <property type="match status" value="1"/>
</dbReference>
<dbReference type="PANTHER" id="PTHR11680:SF50">
    <property type="entry name" value="SERINE HYDROXYMETHYLTRANSFERASE"/>
    <property type="match status" value="1"/>
</dbReference>
<dbReference type="Pfam" id="PF00464">
    <property type="entry name" value="SHMT"/>
    <property type="match status" value="1"/>
</dbReference>
<dbReference type="PIRSF" id="PIRSF000412">
    <property type="entry name" value="SHMT"/>
    <property type="match status" value="1"/>
</dbReference>
<dbReference type="SUPFAM" id="SSF53383">
    <property type="entry name" value="PLP-dependent transferases"/>
    <property type="match status" value="1"/>
</dbReference>
<dbReference type="PROSITE" id="PS00096">
    <property type="entry name" value="SHMT"/>
    <property type="match status" value="1"/>
</dbReference>